<comment type="function">
    <text evidence="6">Possible role in vesicle-mediated transport. May be involved in proper membrane localization of Rab GTPases.</text>
</comment>
<comment type="subunit">
    <text evidence="3 5 6">Interacts with SNX3, TVP18, TVP23, YIP1 and YIP4. Interacts with SEC4; The C-terminal cysteines in the Rab GTPase SEC4 are essential for the interaction. Interacts with YPT1, YPT6, YPT7, YPT10, YPT11, YPT31, YPT32 and YPT52; These proteins are all Rab GTPases.</text>
</comment>
<comment type="interaction">
    <interactant intactId="EBI-24051">
        <id>P53108</id>
    </interactant>
    <interactant intactId="EBI-16219">
        <id>P39940</id>
        <label>RSP5</label>
    </interactant>
    <organismsDiffer>false</organismsDiffer>
    <experiments>2</experiments>
</comment>
<comment type="interaction">
    <interactant intactId="EBI-24051">
        <id>P53108</id>
    </interactant>
    <interactant intactId="EBI-24124">
        <id>P53093</id>
        <label>YIP4</label>
    </interactant>
    <organismsDiffer>false</organismsDiffer>
    <experiments>3</experiments>
</comment>
<comment type="subcellular location">
    <subcellularLocation>
        <location evidence="7">Membrane</location>
        <topology evidence="7">Multi-pass membrane protein</topology>
    </subcellularLocation>
</comment>
<comment type="miscellaneous">
    <text evidence="4">Present with 937 molecules/cell in log phase SD medium.</text>
</comment>
<comment type="similarity">
    <text evidence="7">Belongs to the YIP1 family.</text>
</comment>
<evidence type="ECO:0000255" key="1"/>
<evidence type="ECO:0000256" key="2">
    <source>
        <dbReference type="SAM" id="MobiDB-lite"/>
    </source>
</evidence>
<evidence type="ECO:0000269" key="3">
    <source>
    </source>
</evidence>
<evidence type="ECO:0000269" key="4">
    <source>
    </source>
</evidence>
<evidence type="ECO:0000269" key="5">
    <source>
    </source>
</evidence>
<evidence type="ECO:0000269" key="6">
    <source>
    </source>
</evidence>
<evidence type="ECO:0000305" key="7"/>
<evidence type="ECO:0007744" key="8">
    <source>
    </source>
</evidence>
<keyword id="KW-0472">Membrane</keyword>
<keyword id="KW-0597">Phosphoprotein</keyword>
<keyword id="KW-1185">Reference proteome</keyword>
<keyword id="KW-0812">Transmembrane</keyword>
<keyword id="KW-1133">Transmembrane helix</keyword>
<accession>P53108</accession>
<accession>D6VTZ0</accession>
<organism>
    <name type="scientific">Saccharomyces cerevisiae (strain ATCC 204508 / S288c)</name>
    <name type="common">Baker's yeast</name>
    <dbReference type="NCBI Taxonomy" id="559292"/>
    <lineage>
        <taxon>Eukaryota</taxon>
        <taxon>Fungi</taxon>
        <taxon>Dikarya</taxon>
        <taxon>Ascomycota</taxon>
        <taxon>Saccharomycotina</taxon>
        <taxon>Saccharomycetes</taxon>
        <taxon>Saccharomycetales</taxon>
        <taxon>Saccharomycetaceae</taxon>
        <taxon>Saccharomyces</taxon>
    </lineage>
</organism>
<sequence>MPSNNSSFLDIDDDLEGVDDFGNEPNPFDDATVPDSPNMNNSTAGKGSEFYNTTGSKAESAPLQGQMDPPAYDQVIGQNDNDGLGRNGLRPGLINYYSKYFQIDLTQFKKRLSAVLTFRNDHNSESNEDNTDLYGAVWITATVVMINFTMSRGLNFIISDVIEGVKTGEDIDRASQFKKLLHSIWLFYGYTFGVPFITMQVLNRDEHSERNRSFKSVPELISVYGYANLIWIPVCVILNILDMSKRLRTVQAIQWAIVALGWAQSSYFLNSQISSNNNTETQSNGKFSLSIIVVVALHTLFCLLFRFIIF</sequence>
<name>YIP5_YEAST</name>
<reference key="1">
    <citation type="journal article" date="1995" name="Yeast">
        <title>DNA sequence analysis of a 35 kb segment from Saccharomyces cerevisiae chromosome VII reveals 19 open reading frames including RAD54, ACE1/CUP2, PMR1, RCK1, AMS1 and CAL1/CDC43.</title>
        <authorList>
            <person name="James C.M."/>
            <person name="Indge K.J."/>
            <person name="Oliver S.G."/>
        </authorList>
    </citation>
    <scope>NUCLEOTIDE SEQUENCE [GENOMIC DNA]</scope>
</reference>
<reference key="2">
    <citation type="journal article" date="1997" name="Nature">
        <title>The nucleotide sequence of Saccharomyces cerevisiae chromosome VII.</title>
        <authorList>
            <person name="Tettelin H."/>
            <person name="Agostoni-Carbone M.L."/>
            <person name="Albermann K."/>
            <person name="Albers M."/>
            <person name="Arroyo J."/>
            <person name="Backes U."/>
            <person name="Barreiros T."/>
            <person name="Bertani I."/>
            <person name="Bjourson A.J."/>
            <person name="Brueckner M."/>
            <person name="Bruschi C.V."/>
            <person name="Carignani G."/>
            <person name="Castagnoli L."/>
            <person name="Cerdan E."/>
            <person name="Clemente M.L."/>
            <person name="Coblenz A."/>
            <person name="Coglievina M."/>
            <person name="Coissac E."/>
            <person name="Defoor E."/>
            <person name="Del Bino S."/>
            <person name="Delius H."/>
            <person name="Delneri D."/>
            <person name="de Wergifosse P."/>
            <person name="Dujon B."/>
            <person name="Durand P."/>
            <person name="Entian K.-D."/>
            <person name="Eraso P."/>
            <person name="Escribano V."/>
            <person name="Fabiani L."/>
            <person name="Fartmann B."/>
            <person name="Feroli F."/>
            <person name="Feuermann M."/>
            <person name="Frontali L."/>
            <person name="Garcia-Gonzalez M."/>
            <person name="Garcia-Saez M.I."/>
            <person name="Goffeau A."/>
            <person name="Guerreiro P."/>
            <person name="Hani J."/>
            <person name="Hansen M."/>
            <person name="Hebling U."/>
            <person name="Hernandez K."/>
            <person name="Heumann K."/>
            <person name="Hilger F."/>
            <person name="Hofmann B."/>
            <person name="Indge K.J."/>
            <person name="James C.M."/>
            <person name="Klima R."/>
            <person name="Koetter P."/>
            <person name="Kramer B."/>
            <person name="Kramer W."/>
            <person name="Lauquin G."/>
            <person name="Leuther H."/>
            <person name="Louis E.J."/>
            <person name="Maillier E."/>
            <person name="Marconi A."/>
            <person name="Martegani E."/>
            <person name="Mazon M.J."/>
            <person name="Mazzoni C."/>
            <person name="McReynolds A.D.K."/>
            <person name="Melchioretto P."/>
            <person name="Mewes H.-W."/>
            <person name="Minenkova O."/>
            <person name="Mueller-Auer S."/>
            <person name="Nawrocki A."/>
            <person name="Netter P."/>
            <person name="Neu R."/>
            <person name="Nombela C."/>
            <person name="Oliver S.G."/>
            <person name="Panzeri L."/>
            <person name="Paoluzi S."/>
            <person name="Plevani P."/>
            <person name="Portetelle D."/>
            <person name="Portillo F."/>
            <person name="Potier S."/>
            <person name="Purnelle B."/>
            <person name="Rieger M."/>
            <person name="Riles L."/>
            <person name="Rinaldi T."/>
            <person name="Robben J."/>
            <person name="Rodrigues-Pousada C."/>
            <person name="Rodriguez-Belmonte E."/>
            <person name="Rodriguez-Torres A.M."/>
            <person name="Rose M."/>
            <person name="Ruzzi M."/>
            <person name="Saliola M."/>
            <person name="Sanchez-Perez M."/>
            <person name="Schaefer B."/>
            <person name="Schaefer M."/>
            <person name="Scharfe M."/>
            <person name="Schmidheini T."/>
            <person name="Schreer A."/>
            <person name="Skala J."/>
            <person name="Souciet J.-L."/>
            <person name="Steensma H.Y."/>
            <person name="Talla E."/>
            <person name="Thierry A."/>
            <person name="Vandenbol M."/>
            <person name="van der Aart Q.J.M."/>
            <person name="Van Dyck L."/>
            <person name="Vanoni M."/>
            <person name="Verhasselt P."/>
            <person name="Voet M."/>
            <person name="Volckaert G."/>
            <person name="Wambutt R."/>
            <person name="Watson M.D."/>
            <person name="Weber N."/>
            <person name="Wedler E."/>
            <person name="Wedler H."/>
            <person name="Wipfli P."/>
            <person name="Wolf K."/>
            <person name="Wright L.F."/>
            <person name="Zaccaria P."/>
            <person name="Zimmermann M."/>
            <person name="Zollner A."/>
            <person name="Kleine K."/>
        </authorList>
    </citation>
    <scope>NUCLEOTIDE SEQUENCE [LARGE SCALE GENOMIC DNA]</scope>
    <source>
        <strain>ATCC 204508 / S288c</strain>
    </source>
</reference>
<reference key="3">
    <citation type="journal article" date="2014" name="G3 (Bethesda)">
        <title>The reference genome sequence of Saccharomyces cerevisiae: Then and now.</title>
        <authorList>
            <person name="Engel S.R."/>
            <person name="Dietrich F.S."/>
            <person name="Fisk D.G."/>
            <person name="Binkley G."/>
            <person name="Balakrishnan R."/>
            <person name="Costanzo M.C."/>
            <person name="Dwight S.S."/>
            <person name="Hitz B.C."/>
            <person name="Karra K."/>
            <person name="Nash R.S."/>
            <person name="Weng S."/>
            <person name="Wong E.D."/>
            <person name="Lloyd P."/>
            <person name="Skrzypek M.S."/>
            <person name="Miyasato S.R."/>
            <person name="Simison M."/>
            <person name="Cherry J.M."/>
        </authorList>
    </citation>
    <scope>GENOME REANNOTATION</scope>
    <source>
        <strain>ATCC 204508 / S288c</strain>
    </source>
</reference>
<reference key="4">
    <citation type="journal article" date="2007" name="Genome Res.">
        <title>Approaching a complete repository of sequence-verified protein-encoding clones for Saccharomyces cerevisiae.</title>
        <authorList>
            <person name="Hu Y."/>
            <person name="Rolfs A."/>
            <person name="Bhullar B."/>
            <person name="Murthy T.V.S."/>
            <person name="Zhu C."/>
            <person name="Berger M.F."/>
            <person name="Camargo A.A."/>
            <person name="Kelley F."/>
            <person name="McCarron S."/>
            <person name="Jepson D."/>
            <person name="Richardson A."/>
            <person name="Raphael J."/>
            <person name="Moreira D."/>
            <person name="Taycher E."/>
            <person name="Zuo D."/>
            <person name="Mohr S."/>
            <person name="Kane M.F."/>
            <person name="Williamson J."/>
            <person name="Simpson A.J.G."/>
            <person name="Bulyk M.L."/>
            <person name="Harlow E."/>
            <person name="Marsischky G."/>
            <person name="Kolodner R.D."/>
            <person name="LaBaer J."/>
        </authorList>
    </citation>
    <scope>NUCLEOTIDE SEQUENCE [GENOMIC DNA]</scope>
    <source>
        <strain>ATCC 204508 / S288c</strain>
    </source>
</reference>
<reference key="5">
    <citation type="journal article" date="2002" name="FEBS Lett.">
        <title>Identification of the novel proteins Yip4p and Yip5p as Rab GTPase interacting factors.</title>
        <authorList>
            <person name="Calero M."/>
            <person name="Winand N.J."/>
            <person name="Collins R.N."/>
        </authorList>
    </citation>
    <scope>INTERACTION WITH SEC4; YIP1; YPT1; YPT7; YPT10; YPT11; YPT31; YPT32 AND YPT52</scope>
</reference>
<reference key="6">
    <citation type="journal article" date="2003" name="Nature">
        <title>Global analysis of protein expression in yeast.</title>
        <authorList>
            <person name="Ghaemmaghami S."/>
            <person name="Huh W.-K."/>
            <person name="Bower K."/>
            <person name="Howson R.W."/>
            <person name="Belle A."/>
            <person name="Dephoure N."/>
            <person name="O'Shea E.K."/>
            <person name="Weissman J.S."/>
        </authorList>
    </citation>
    <scope>LEVEL OF PROTEIN EXPRESSION [LARGE SCALE ANALYSIS]</scope>
</reference>
<reference key="7">
    <citation type="journal article" date="2004" name="Mol. Cell. Proteomics">
        <title>The phox homology (PX) domain protein interaction network in yeast.</title>
        <authorList>
            <person name="Vollert C.S."/>
            <person name="Uetz P."/>
        </authorList>
    </citation>
    <scope>INTERACTION WITH SNX3</scope>
</reference>
<reference key="8">
    <citation type="journal article" date="2007" name="Exp. Cell Res.">
        <title>Tvp38, Tvp23, Tvp18 and Tvp15: novel membrane proteins in the Tlg2-containing Golgi/endosome compartments of Saccharomyces cerevisiae.</title>
        <authorList>
            <person name="Inadome H."/>
            <person name="Noda Y."/>
            <person name="Kamimura Y."/>
            <person name="Adachi H."/>
            <person name="Yoda K."/>
        </authorList>
    </citation>
    <scope>FUNCTION</scope>
    <scope>SUBCELLULAR LOCATION</scope>
    <scope>INTERACTION WITH TVP18; TVP23 AND YIP4</scope>
</reference>
<reference key="9">
    <citation type="journal article" date="2009" name="Science">
        <title>Global analysis of Cdk1 substrate phosphorylation sites provides insights into evolution.</title>
        <authorList>
            <person name="Holt L.J."/>
            <person name="Tuch B.B."/>
            <person name="Villen J."/>
            <person name="Johnson A.D."/>
            <person name="Gygi S.P."/>
            <person name="Morgan D.O."/>
        </authorList>
    </citation>
    <scope>PHOSPHORYLATION [LARGE SCALE ANALYSIS] AT SER-60</scope>
    <scope>IDENTIFICATION BY MASS SPECTROMETRY [LARGE SCALE ANALYSIS]</scope>
</reference>
<protein>
    <recommendedName>
        <fullName>Protein YIP5</fullName>
    </recommendedName>
    <alternativeName>
        <fullName>YPT-interacting protein 5</fullName>
    </alternativeName>
</protein>
<proteinExistence type="evidence at protein level"/>
<gene>
    <name type="primary">YIP5</name>
    <name type="ordered locus">YGL161C</name>
    <name type="ORF">G1832</name>
</gene>
<feature type="chain" id="PRO_0000202730" description="Protein YIP5">
    <location>
        <begin position="1"/>
        <end position="310"/>
    </location>
</feature>
<feature type="transmembrane region" description="Helical" evidence="1">
    <location>
        <begin position="131"/>
        <end position="151"/>
    </location>
</feature>
<feature type="transmembrane region" description="Helical" evidence="1">
    <location>
        <begin position="181"/>
        <end position="201"/>
    </location>
</feature>
<feature type="transmembrane region" description="Helical" evidence="1">
    <location>
        <begin position="220"/>
        <end position="240"/>
    </location>
</feature>
<feature type="transmembrane region" description="Helical" evidence="1">
    <location>
        <begin position="249"/>
        <end position="269"/>
    </location>
</feature>
<feature type="transmembrane region" description="Helical" evidence="1">
    <location>
        <begin position="290"/>
        <end position="310"/>
    </location>
</feature>
<feature type="region of interest" description="Disordered" evidence="2">
    <location>
        <begin position="1"/>
        <end position="84"/>
    </location>
</feature>
<feature type="compositionally biased region" description="Acidic residues" evidence="2">
    <location>
        <begin position="10"/>
        <end position="22"/>
    </location>
</feature>
<feature type="compositionally biased region" description="Polar residues" evidence="2">
    <location>
        <begin position="35"/>
        <end position="57"/>
    </location>
</feature>
<feature type="modified residue" description="Phosphoserine" evidence="8">
    <location>
        <position position="60"/>
    </location>
</feature>
<dbReference type="EMBL" id="Z48618">
    <property type="status" value="NOT_ANNOTATED_CDS"/>
    <property type="molecule type" value="Genomic_DNA"/>
</dbReference>
<dbReference type="EMBL" id="Z72683">
    <property type="protein sequence ID" value="CAA96873.1"/>
    <property type="molecule type" value="Genomic_DNA"/>
</dbReference>
<dbReference type="EMBL" id="AY557828">
    <property type="protein sequence ID" value="AAS56154.1"/>
    <property type="molecule type" value="Genomic_DNA"/>
</dbReference>
<dbReference type="EMBL" id="BK006941">
    <property type="protein sequence ID" value="DAA07951.1"/>
    <property type="molecule type" value="Genomic_DNA"/>
</dbReference>
<dbReference type="PIR" id="S60425">
    <property type="entry name" value="S60425"/>
</dbReference>
<dbReference type="RefSeq" id="NP_011354.3">
    <property type="nucleotide sequence ID" value="NM_001181026.3"/>
</dbReference>
<dbReference type="BioGRID" id="33092">
    <property type="interactions" value="86"/>
</dbReference>
<dbReference type="DIP" id="DIP-1728N"/>
<dbReference type="FunCoup" id="P53108">
    <property type="interactions" value="391"/>
</dbReference>
<dbReference type="IntAct" id="P53108">
    <property type="interactions" value="34"/>
</dbReference>
<dbReference type="MINT" id="P53108"/>
<dbReference type="STRING" id="4932.YGL161C"/>
<dbReference type="TCDB" id="9.B.135.2.9">
    <property type="family name" value="the membrane trafficking yip (yip) family"/>
</dbReference>
<dbReference type="iPTMnet" id="P53108"/>
<dbReference type="PaxDb" id="4932-YGL161C"/>
<dbReference type="PeptideAtlas" id="P53108"/>
<dbReference type="EnsemblFungi" id="YGL161C_mRNA">
    <property type="protein sequence ID" value="YGL161C"/>
    <property type="gene ID" value="YGL161C"/>
</dbReference>
<dbReference type="GeneID" id="852715"/>
<dbReference type="KEGG" id="sce:YGL161C"/>
<dbReference type="AGR" id="SGD:S000003129"/>
<dbReference type="SGD" id="S000003129">
    <property type="gene designation" value="YIP5"/>
</dbReference>
<dbReference type="VEuPathDB" id="FungiDB:YGL161C"/>
<dbReference type="eggNOG" id="KOG3114">
    <property type="taxonomic scope" value="Eukaryota"/>
</dbReference>
<dbReference type="HOGENOM" id="CLU_061845_0_0_1"/>
<dbReference type="InParanoid" id="P53108"/>
<dbReference type="OMA" id="CITITIG"/>
<dbReference type="OrthoDB" id="10256463at2759"/>
<dbReference type="BioCyc" id="YEAST:G3O-30650-MONOMER"/>
<dbReference type="BioGRID-ORCS" id="852715">
    <property type="hits" value="0 hits in 10 CRISPR screens"/>
</dbReference>
<dbReference type="PRO" id="PR:P53108"/>
<dbReference type="Proteomes" id="UP000002311">
    <property type="component" value="Chromosome VII"/>
</dbReference>
<dbReference type="RNAct" id="P53108">
    <property type="molecule type" value="protein"/>
</dbReference>
<dbReference type="GO" id="GO:0005794">
    <property type="term" value="C:Golgi apparatus"/>
    <property type="evidence" value="ECO:0000314"/>
    <property type="project" value="SGD"/>
</dbReference>
<dbReference type="GO" id="GO:0016020">
    <property type="term" value="C:membrane"/>
    <property type="evidence" value="ECO:0007669"/>
    <property type="project" value="UniProtKB-SubCell"/>
</dbReference>
<dbReference type="GO" id="GO:0031267">
    <property type="term" value="F:small GTPase binding"/>
    <property type="evidence" value="ECO:0000353"/>
    <property type="project" value="SGD"/>
</dbReference>
<dbReference type="GO" id="GO:0016192">
    <property type="term" value="P:vesicle-mediated transport"/>
    <property type="evidence" value="ECO:0007669"/>
    <property type="project" value="InterPro"/>
</dbReference>
<dbReference type="InterPro" id="IPR006977">
    <property type="entry name" value="Yip1_dom"/>
</dbReference>
<dbReference type="InterPro" id="IPR039765">
    <property type="entry name" value="Yip5/YIPF1/YIPF2"/>
</dbReference>
<dbReference type="PANTHER" id="PTHR12822">
    <property type="entry name" value="PROTEIN YIPF"/>
    <property type="match status" value="1"/>
</dbReference>
<dbReference type="PANTHER" id="PTHR12822:SF2">
    <property type="entry name" value="PROTEIN YIPF"/>
    <property type="match status" value="1"/>
</dbReference>
<dbReference type="Pfam" id="PF04893">
    <property type="entry name" value="Yip1"/>
    <property type="match status" value="1"/>
</dbReference>